<dbReference type="GO" id="GO:0005576">
    <property type="term" value="C:extracellular region"/>
    <property type="evidence" value="ECO:0007669"/>
    <property type="project" value="UniProtKB-SubCell"/>
</dbReference>
<dbReference type="GO" id="GO:0006952">
    <property type="term" value="P:defense response"/>
    <property type="evidence" value="ECO:0007669"/>
    <property type="project" value="UniProtKB-KW"/>
</dbReference>
<protein>
    <recommendedName>
        <fullName evidence="3">Magainin-BM1</fullName>
    </recommendedName>
</protein>
<keyword id="KW-0878">Amphibian defense peptide</keyword>
<keyword id="KW-0929">Antimicrobial</keyword>
<keyword id="KW-0903">Direct protein sequencing</keyword>
<keyword id="KW-0964">Secreted</keyword>
<feature type="peptide" id="PRO_0000440792" description="Magainin-BM1" evidence="2">
    <location>
        <begin position="1"/>
        <end position="23"/>
    </location>
</feature>
<evidence type="ECO:0000250" key="1">
    <source>
        <dbReference type="UniProtKB" id="C0HK84"/>
    </source>
</evidence>
<evidence type="ECO:0000269" key="2">
    <source>
    </source>
</evidence>
<evidence type="ECO:0000303" key="3">
    <source>
    </source>
</evidence>
<evidence type="ECO:0000305" key="4"/>
<evidence type="ECO:0000305" key="5">
    <source>
    </source>
</evidence>
<accession>C0HKL5</accession>
<name>MGBM1_XENBM</name>
<reference evidence="4" key="1">
    <citation type="journal article" date="2015" name="Peptides">
        <title>Host-defense and trefoil factor family peptides in skin secretions of the Mawa clawed frog Xenopus boumbaensis (Pipidae).</title>
        <authorList>
            <person name="Conlon J.M."/>
            <person name="Mechkarska M."/>
            <person name="Kolodziejek J."/>
            <person name="Leprince J."/>
            <person name="Coquet L."/>
            <person name="Jouenne T."/>
            <person name="Vaudry H."/>
            <person name="Nowotny N."/>
            <person name="King J.D."/>
        </authorList>
    </citation>
    <scope>PROTEIN SEQUENCE</scope>
    <scope>SUBCELLULAR LOCATION</scope>
    <scope>MASS SPECTROMETRY</scope>
    <source>
        <tissue evidence="3">Skin secretion</tissue>
    </source>
</reference>
<organism evidence="3">
    <name type="scientific">Xenopus boumbaensis</name>
    <name type="common">Mawa clawed frog</name>
    <dbReference type="NCBI Taxonomy" id="288550"/>
    <lineage>
        <taxon>Eukaryota</taxon>
        <taxon>Metazoa</taxon>
        <taxon>Chordata</taxon>
        <taxon>Craniata</taxon>
        <taxon>Vertebrata</taxon>
        <taxon>Euteleostomi</taxon>
        <taxon>Amphibia</taxon>
        <taxon>Batrachia</taxon>
        <taxon>Anura</taxon>
        <taxon>Pipoidea</taxon>
        <taxon>Pipidae</taxon>
        <taxon>Xenopodinae</taxon>
        <taxon>Xenopus</taxon>
        <taxon>Xenopus</taxon>
    </lineage>
</organism>
<proteinExistence type="evidence at protein level"/>
<sequence>GIKEFAHSLGKFGKAFVGGILNQ</sequence>
<comment type="function">
    <text evidence="1">Antimicrobial peptide.</text>
</comment>
<comment type="subcellular location">
    <subcellularLocation>
        <location evidence="2">Secreted</location>
    </subcellularLocation>
</comment>
<comment type="tissue specificity">
    <text evidence="5">Expressed by the skin glands.</text>
</comment>
<comment type="mass spectrometry"/>
<comment type="similarity">
    <text evidence="4">Belongs to the gastrin/cholecystokinin family. Magainin subfamily.</text>
</comment>